<accession>B6I743</accession>
<sequence>MSAQPVDIQIFGRSLRVNCPPDQRDALNQAADDLNQRLQDLKERTRVTNTEQLVFIAALNISYELAQEKAKTRDYAASMEQRIRMLQQTIEQALLEQGRITEKTNQNFE</sequence>
<keyword id="KW-0131">Cell cycle</keyword>
<keyword id="KW-0132">Cell division</keyword>
<keyword id="KW-0175">Coiled coil</keyword>
<keyword id="KW-0963">Cytoplasm</keyword>
<keyword id="KW-0717">Septation</keyword>
<proteinExistence type="inferred from homology"/>
<gene>
    <name evidence="1" type="primary">zapA</name>
    <name type="ordered locus">ECSE_3173</name>
</gene>
<name>ZAPA_ECOSE</name>
<reference key="1">
    <citation type="journal article" date="2008" name="DNA Res.">
        <title>Complete genome sequence and comparative analysis of the wild-type commensal Escherichia coli strain SE11 isolated from a healthy adult.</title>
        <authorList>
            <person name="Oshima K."/>
            <person name="Toh H."/>
            <person name="Ogura Y."/>
            <person name="Sasamoto H."/>
            <person name="Morita H."/>
            <person name="Park S.-H."/>
            <person name="Ooka T."/>
            <person name="Iyoda S."/>
            <person name="Taylor T.D."/>
            <person name="Hayashi T."/>
            <person name="Itoh K."/>
            <person name="Hattori M."/>
        </authorList>
    </citation>
    <scope>NUCLEOTIDE SEQUENCE [LARGE SCALE GENOMIC DNA]</scope>
    <source>
        <strain>SE11</strain>
    </source>
</reference>
<comment type="function">
    <text evidence="1">Activator of cell division through the inhibition of FtsZ GTPase activity, therefore promoting FtsZ assembly into bundles of protofilaments necessary for the formation of the division Z ring. It is recruited early at mid-cell but it is not essential for cell division.</text>
</comment>
<comment type="subunit">
    <text evidence="1">Homodimer. Interacts with FtsZ.</text>
</comment>
<comment type="subcellular location">
    <subcellularLocation>
        <location evidence="1">Cytoplasm</location>
    </subcellularLocation>
    <text evidence="1">Localizes at mid-cell.</text>
</comment>
<comment type="similarity">
    <text evidence="1">Belongs to the ZapA family. Type 1 subfamily.</text>
</comment>
<feature type="chain" id="PRO_1000189514" description="Cell division protein ZapA">
    <location>
        <begin position="1"/>
        <end position="109"/>
    </location>
</feature>
<feature type="coiled-coil region" evidence="1">
    <location>
        <begin position="21"/>
        <end position="99"/>
    </location>
</feature>
<organism>
    <name type="scientific">Escherichia coli (strain SE11)</name>
    <dbReference type="NCBI Taxonomy" id="409438"/>
    <lineage>
        <taxon>Bacteria</taxon>
        <taxon>Pseudomonadati</taxon>
        <taxon>Pseudomonadota</taxon>
        <taxon>Gammaproteobacteria</taxon>
        <taxon>Enterobacterales</taxon>
        <taxon>Enterobacteriaceae</taxon>
        <taxon>Escherichia</taxon>
    </lineage>
</organism>
<dbReference type="EMBL" id="AP009240">
    <property type="protein sequence ID" value="BAG78697.1"/>
    <property type="molecule type" value="Genomic_DNA"/>
</dbReference>
<dbReference type="RefSeq" id="WP_001276008.1">
    <property type="nucleotide sequence ID" value="NC_011415.1"/>
</dbReference>
<dbReference type="SMR" id="B6I743"/>
<dbReference type="GeneID" id="93779091"/>
<dbReference type="KEGG" id="ecy:ECSE_3173"/>
<dbReference type="HOGENOM" id="CLU_116623_3_0_6"/>
<dbReference type="Proteomes" id="UP000008199">
    <property type="component" value="Chromosome"/>
</dbReference>
<dbReference type="GO" id="GO:0032153">
    <property type="term" value="C:cell division site"/>
    <property type="evidence" value="ECO:0007669"/>
    <property type="project" value="TreeGrafter"/>
</dbReference>
<dbReference type="GO" id="GO:0030428">
    <property type="term" value="C:cell septum"/>
    <property type="evidence" value="ECO:0007669"/>
    <property type="project" value="TreeGrafter"/>
</dbReference>
<dbReference type="GO" id="GO:0005829">
    <property type="term" value="C:cytosol"/>
    <property type="evidence" value="ECO:0007669"/>
    <property type="project" value="TreeGrafter"/>
</dbReference>
<dbReference type="GO" id="GO:0005886">
    <property type="term" value="C:plasma membrane"/>
    <property type="evidence" value="ECO:0007669"/>
    <property type="project" value="UniProtKB-UniRule"/>
</dbReference>
<dbReference type="GO" id="GO:0000917">
    <property type="term" value="P:division septum assembly"/>
    <property type="evidence" value="ECO:0007669"/>
    <property type="project" value="UniProtKB-KW"/>
</dbReference>
<dbReference type="GO" id="GO:0043093">
    <property type="term" value="P:FtsZ-dependent cytokinesis"/>
    <property type="evidence" value="ECO:0007669"/>
    <property type="project" value="TreeGrafter"/>
</dbReference>
<dbReference type="GO" id="GO:0000921">
    <property type="term" value="P:septin ring assembly"/>
    <property type="evidence" value="ECO:0007669"/>
    <property type="project" value="TreeGrafter"/>
</dbReference>
<dbReference type="FunFam" id="1.20.5.50:FF:000001">
    <property type="entry name" value="Cell division protein ZapA"/>
    <property type="match status" value="1"/>
</dbReference>
<dbReference type="FunFam" id="3.30.160.880:FF:000001">
    <property type="entry name" value="Cell division protein ZapA"/>
    <property type="match status" value="1"/>
</dbReference>
<dbReference type="Gene3D" id="1.20.5.50">
    <property type="match status" value="1"/>
</dbReference>
<dbReference type="Gene3D" id="3.30.160.880">
    <property type="entry name" value="Cell division protein ZapA protomer, N-terminal domain"/>
    <property type="match status" value="1"/>
</dbReference>
<dbReference type="HAMAP" id="MF_02012">
    <property type="entry name" value="ZapA_type1"/>
    <property type="match status" value="1"/>
</dbReference>
<dbReference type="InterPro" id="IPR007838">
    <property type="entry name" value="Cell_div_ZapA-like"/>
</dbReference>
<dbReference type="InterPro" id="IPR036192">
    <property type="entry name" value="Cell_div_ZapA-like_sf"/>
</dbReference>
<dbReference type="InterPro" id="IPR023771">
    <property type="entry name" value="Cell_div_ZapA_eubact"/>
</dbReference>
<dbReference type="InterPro" id="IPR042233">
    <property type="entry name" value="Cell_div_ZapA_N"/>
</dbReference>
<dbReference type="NCBIfam" id="NF008209">
    <property type="entry name" value="PRK10972.1"/>
    <property type="match status" value="1"/>
</dbReference>
<dbReference type="PANTHER" id="PTHR34981">
    <property type="entry name" value="CELL DIVISION PROTEIN ZAPA"/>
    <property type="match status" value="1"/>
</dbReference>
<dbReference type="PANTHER" id="PTHR34981:SF1">
    <property type="entry name" value="CELL DIVISION PROTEIN ZAPA"/>
    <property type="match status" value="1"/>
</dbReference>
<dbReference type="Pfam" id="PF05164">
    <property type="entry name" value="ZapA"/>
    <property type="match status" value="1"/>
</dbReference>
<dbReference type="SUPFAM" id="SSF102829">
    <property type="entry name" value="Cell division protein ZapA-like"/>
    <property type="match status" value="1"/>
</dbReference>
<protein>
    <recommendedName>
        <fullName evidence="1">Cell division protein ZapA</fullName>
    </recommendedName>
    <alternativeName>
        <fullName evidence="1">Z ring-associated protein ZapA</fullName>
    </alternativeName>
</protein>
<evidence type="ECO:0000255" key="1">
    <source>
        <dbReference type="HAMAP-Rule" id="MF_02012"/>
    </source>
</evidence>